<organism>
    <name type="scientific">Methanosarcina mazei (strain ATCC BAA-159 / DSM 3647 / Goe1 / Go1 / JCM 11833 / OCM 88)</name>
    <name type="common">Methanosarcina frisia</name>
    <dbReference type="NCBI Taxonomy" id="192952"/>
    <lineage>
        <taxon>Archaea</taxon>
        <taxon>Methanobacteriati</taxon>
        <taxon>Methanobacteriota</taxon>
        <taxon>Stenosarchaea group</taxon>
        <taxon>Methanomicrobia</taxon>
        <taxon>Methanosarcinales</taxon>
        <taxon>Methanosarcinaceae</taxon>
        <taxon>Methanosarcina</taxon>
    </lineage>
</organism>
<feature type="chain" id="PRO_0000326610" description="Transcription factor E">
    <location>
        <begin position="1"/>
        <end position="164"/>
    </location>
</feature>
<feature type="domain" description="HTH TFE/IIEalpha-type" evidence="1">
    <location>
        <begin position="5"/>
        <end position="87"/>
    </location>
</feature>
<protein>
    <recommendedName>
        <fullName evidence="1">Transcription factor E</fullName>
        <shortName evidence="1">TFE</shortName>
    </recommendedName>
    <alternativeName>
        <fullName evidence="1">TFIIE subunit alpha homolog</fullName>
    </alternativeName>
    <alternativeName>
        <fullName evidence="1">Transcription initiation factor TFIIE</fullName>
    </alternativeName>
</protein>
<name>TFE_METMA</name>
<gene>
    <name evidence="1" type="primary">tfe</name>
    <name type="ordered locus">MM_0692</name>
</gene>
<sequence length="164" mass="19145">MVDLNDKVIRGYLRSLVGDDGLKMIEQMPEGNVTDEEIAAKTGVLLNTVRRTLFILYENKFAIVVRERDSNSGWLTYLWHLDFSDIEHQLMREKKRLLRNLKTRLEFEENHVFYVCPQGCVRLLFDEATETEFLCPMCGEDLVYYDNSRFVGVLKKRVEALSSA</sequence>
<accession>Q8PZ06</accession>
<evidence type="ECO:0000255" key="1">
    <source>
        <dbReference type="HAMAP-Rule" id="MF_01909"/>
    </source>
</evidence>
<dbReference type="EMBL" id="AE008384">
    <property type="protein sequence ID" value="AAM30388.1"/>
    <property type="molecule type" value="Genomic_DNA"/>
</dbReference>
<dbReference type="RefSeq" id="WP_011032643.1">
    <property type="nucleotide sequence ID" value="NC_003901.1"/>
</dbReference>
<dbReference type="SMR" id="Q8PZ06"/>
<dbReference type="KEGG" id="mma:MM_0692"/>
<dbReference type="PATRIC" id="fig|192952.21.peg.823"/>
<dbReference type="eggNOG" id="arCOG04270">
    <property type="taxonomic scope" value="Archaea"/>
</dbReference>
<dbReference type="HOGENOM" id="CLU_100097_0_0_2"/>
<dbReference type="Proteomes" id="UP000000595">
    <property type="component" value="Chromosome"/>
</dbReference>
<dbReference type="GO" id="GO:0003677">
    <property type="term" value="F:DNA binding"/>
    <property type="evidence" value="ECO:0007669"/>
    <property type="project" value="UniProtKB-KW"/>
</dbReference>
<dbReference type="GO" id="GO:0006355">
    <property type="term" value="P:regulation of DNA-templated transcription"/>
    <property type="evidence" value="ECO:0007669"/>
    <property type="project" value="InterPro"/>
</dbReference>
<dbReference type="GO" id="GO:0006367">
    <property type="term" value="P:transcription initiation at RNA polymerase II promoter"/>
    <property type="evidence" value="ECO:0007669"/>
    <property type="project" value="InterPro"/>
</dbReference>
<dbReference type="Gene3D" id="1.10.10.10">
    <property type="entry name" value="Winged helix-like DNA-binding domain superfamily/Winged helix DNA-binding domain"/>
    <property type="match status" value="1"/>
</dbReference>
<dbReference type="HAMAP" id="MF_01909">
    <property type="entry name" value="TFE_arch"/>
    <property type="match status" value="1"/>
</dbReference>
<dbReference type="InterPro" id="IPR016481">
    <property type="entry name" value="TF_E_archaea"/>
</dbReference>
<dbReference type="InterPro" id="IPR039997">
    <property type="entry name" value="TFE"/>
</dbReference>
<dbReference type="InterPro" id="IPR017919">
    <property type="entry name" value="TFIIE/TFIIEa_HTH"/>
</dbReference>
<dbReference type="InterPro" id="IPR002853">
    <property type="entry name" value="TFIIE_asu"/>
</dbReference>
<dbReference type="InterPro" id="IPR024550">
    <property type="entry name" value="TFIIEa/SarR/Rpc3_HTH_dom"/>
</dbReference>
<dbReference type="InterPro" id="IPR036388">
    <property type="entry name" value="WH-like_DNA-bd_sf"/>
</dbReference>
<dbReference type="InterPro" id="IPR036390">
    <property type="entry name" value="WH_DNA-bd_sf"/>
</dbReference>
<dbReference type="PANTHER" id="PTHR13097:SF7">
    <property type="entry name" value="GENERAL TRANSCRIPTION FACTOR IIE SUBUNIT 1"/>
    <property type="match status" value="1"/>
</dbReference>
<dbReference type="PANTHER" id="PTHR13097">
    <property type="entry name" value="TRANSCRIPTION INITIATION FACTOR IIE, ALPHA SUBUNIT"/>
    <property type="match status" value="1"/>
</dbReference>
<dbReference type="Pfam" id="PF02002">
    <property type="entry name" value="TFIIE_alpha"/>
    <property type="match status" value="1"/>
</dbReference>
<dbReference type="PIRSF" id="PIRSF006373">
    <property type="entry name" value="TF_E_archaea"/>
    <property type="match status" value="1"/>
</dbReference>
<dbReference type="SMART" id="SM00531">
    <property type="entry name" value="TFIIE"/>
    <property type="match status" value="1"/>
</dbReference>
<dbReference type="SUPFAM" id="SSF46785">
    <property type="entry name" value="Winged helix' DNA-binding domain"/>
    <property type="match status" value="1"/>
</dbReference>
<dbReference type="PROSITE" id="PS51344">
    <property type="entry name" value="HTH_TFE_IIE"/>
    <property type="match status" value="1"/>
</dbReference>
<reference key="1">
    <citation type="journal article" date="2002" name="J. Mol. Microbiol. Biotechnol.">
        <title>The genome of Methanosarcina mazei: evidence for lateral gene transfer between Bacteria and Archaea.</title>
        <authorList>
            <person name="Deppenmeier U."/>
            <person name="Johann A."/>
            <person name="Hartsch T."/>
            <person name="Merkl R."/>
            <person name="Schmitz R.A."/>
            <person name="Martinez-Arias R."/>
            <person name="Henne A."/>
            <person name="Wiezer A."/>
            <person name="Baeumer S."/>
            <person name="Jacobi C."/>
            <person name="Brueggemann H."/>
            <person name="Lienard T."/>
            <person name="Christmann A."/>
            <person name="Boemecke M."/>
            <person name="Steckel S."/>
            <person name="Bhattacharyya A."/>
            <person name="Lykidis A."/>
            <person name="Overbeek R."/>
            <person name="Klenk H.-P."/>
            <person name="Gunsalus R.P."/>
            <person name="Fritz H.-J."/>
            <person name="Gottschalk G."/>
        </authorList>
    </citation>
    <scope>NUCLEOTIDE SEQUENCE [LARGE SCALE GENOMIC DNA]</scope>
    <source>
        <strain>ATCC BAA-159 / DSM 3647 / Goe1 / Go1 / JCM 11833 / OCM 88</strain>
    </source>
</reference>
<comment type="function">
    <text evidence="1">Transcription factor that plays a role in the activation of archaeal genes transcribed by RNA polymerase. Facilitates transcription initiation by enhancing TATA-box recognition by TATA-box-binding protein (Tbp), and transcription factor B (Tfb) and RNA polymerase recruitment. Not absolutely required for transcription in vitro, but particularly important in cases where Tbp or Tfb function is not optimal. It dynamically alters the nucleic acid-binding properties of RNA polymerases by stabilizing the initiation complex and destabilizing elongation complexes. Seems to translocate with the RNA polymerase following initiation and acts by binding to the non template strand of the transcription bubble in elongation complexes.</text>
</comment>
<comment type="subunit">
    <text evidence="1">Monomer. Interaction with RNA polymerase subunits RpoF and RpoE is necessary for Tfe stimulatory transcription activity. Able to interact with Tbp and RNA polymerase in the absence of DNA promoter. Interacts both with the preinitiation and elongation complexes.</text>
</comment>
<comment type="domain">
    <text evidence="1">The winged helix domain is involved in binding to DNA in the preinitiation complex.</text>
</comment>
<comment type="similarity">
    <text evidence="1">Belongs to the TFE family.</text>
</comment>
<proteinExistence type="inferred from homology"/>
<keyword id="KW-0238">DNA-binding</keyword>
<keyword id="KW-0804">Transcription</keyword>
<keyword id="KW-0805">Transcription regulation</keyword>